<sequence>MADFFMTNLWPLIVVIGQSVLLIVVLLISIAYILLADRKIWAAVQIRRGPNVVGPWGLLQSFADLLKMILKEPMIPSGANKGVFLLAPLVTCVLALSAWAVIPVSAGWVIADINVGVLYILAVSSLSVYGIIMAGWSSNSKYPFLAALRSAAQMVSYEVSIGFVIICVLLCVGSLNLTAIVQAQNSQWGVLGWYWLPLFPMFVVFYVSALAETNRPPFDLVEAESELVAGFMVEYSSTPYMLFVLGEYVAIVTMCAMGTILFLGGWLPPVPYAPFTWVPGIVWFALKVLFMFFMFAMAKAIVPRYRYDQLMRLGWKVFLPLSLAMVVIVAAVLQFAGLAPK</sequence>
<keyword id="KW-0997">Cell inner membrane</keyword>
<keyword id="KW-1003">Cell membrane</keyword>
<keyword id="KW-0472">Membrane</keyword>
<keyword id="KW-0520">NAD</keyword>
<keyword id="KW-0874">Quinone</keyword>
<keyword id="KW-1185">Reference proteome</keyword>
<keyword id="KW-1278">Translocase</keyword>
<keyword id="KW-0812">Transmembrane</keyword>
<keyword id="KW-1133">Transmembrane helix</keyword>
<keyword id="KW-0830">Ubiquinone</keyword>
<comment type="function">
    <text evidence="1">NDH-1 shuttles electrons from NADH, via FMN and iron-sulfur (Fe-S) centers, to quinones in the respiratory chain. The immediate electron acceptor for the enzyme in this species is believed to be ubiquinone. Couples the redox reaction to proton translocation (for every two electrons transferred, four hydrogen ions are translocated across the cytoplasmic membrane), and thus conserves the redox energy in a proton gradient. This subunit may bind ubiquinone.</text>
</comment>
<comment type="catalytic activity">
    <reaction evidence="1">
        <text>a quinone + NADH + 5 H(+)(in) = a quinol + NAD(+) + 4 H(+)(out)</text>
        <dbReference type="Rhea" id="RHEA:57888"/>
        <dbReference type="ChEBI" id="CHEBI:15378"/>
        <dbReference type="ChEBI" id="CHEBI:24646"/>
        <dbReference type="ChEBI" id="CHEBI:57540"/>
        <dbReference type="ChEBI" id="CHEBI:57945"/>
        <dbReference type="ChEBI" id="CHEBI:132124"/>
    </reaction>
</comment>
<comment type="subunit">
    <text evidence="1">NDH-1 is composed of 14 different subunits. Subunits NuoA, H, J, K, L, M, N constitute the membrane sector of the complex.</text>
</comment>
<comment type="subcellular location">
    <subcellularLocation>
        <location evidence="1">Cell inner membrane</location>
        <topology evidence="1">Multi-pass membrane protein</topology>
    </subcellularLocation>
</comment>
<comment type="similarity">
    <text evidence="1">Belongs to the complex I subunit 1 family.</text>
</comment>
<dbReference type="EC" id="7.1.1.-" evidence="1"/>
<dbReference type="EMBL" id="CP000250">
    <property type="protein sequence ID" value="ABD07284.1"/>
    <property type="molecule type" value="Genomic_DNA"/>
</dbReference>
<dbReference type="RefSeq" id="WP_011441469.1">
    <property type="nucleotide sequence ID" value="NC_007778.1"/>
</dbReference>
<dbReference type="SMR" id="Q2IWX6"/>
<dbReference type="STRING" id="316058.RPB_2581"/>
<dbReference type="KEGG" id="rpb:RPB_2581"/>
<dbReference type="eggNOG" id="COG1005">
    <property type="taxonomic scope" value="Bacteria"/>
</dbReference>
<dbReference type="HOGENOM" id="CLU_015134_0_1_5"/>
<dbReference type="OrthoDB" id="9803734at2"/>
<dbReference type="Proteomes" id="UP000008809">
    <property type="component" value="Chromosome"/>
</dbReference>
<dbReference type="GO" id="GO:0005886">
    <property type="term" value="C:plasma membrane"/>
    <property type="evidence" value="ECO:0007669"/>
    <property type="project" value="UniProtKB-SubCell"/>
</dbReference>
<dbReference type="GO" id="GO:0003954">
    <property type="term" value="F:NADH dehydrogenase activity"/>
    <property type="evidence" value="ECO:0007669"/>
    <property type="project" value="TreeGrafter"/>
</dbReference>
<dbReference type="GO" id="GO:0016655">
    <property type="term" value="F:oxidoreductase activity, acting on NAD(P)H, quinone or similar compound as acceptor"/>
    <property type="evidence" value="ECO:0007669"/>
    <property type="project" value="UniProtKB-UniRule"/>
</dbReference>
<dbReference type="GO" id="GO:0048038">
    <property type="term" value="F:quinone binding"/>
    <property type="evidence" value="ECO:0007669"/>
    <property type="project" value="UniProtKB-KW"/>
</dbReference>
<dbReference type="GO" id="GO:0009060">
    <property type="term" value="P:aerobic respiration"/>
    <property type="evidence" value="ECO:0007669"/>
    <property type="project" value="TreeGrafter"/>
</dbReference>
<dbReference type="HAMAP" id="MF_01350">
    <property type="entry name" value="NDH1_NuoH"/>
    <property type="match status" value="1"/>
</dbReference>
<dbReference type="InterPro" id="IPR001694">
    <property type="entry name" value="NADH_UbQ_OxRdtase_su1/FPO"/>
</dbReference>
<dbReference type="InterPro" id="IPR018086">
    <property type="entry name" value="NADH_UbQ_OxRdtase_su1_CS"/>
</dbReference>
<dbReference type="NCBIfam" id="NF004741">
    <property type="entry name" value="PRK06076.1-2"/>
    <property type="match status" value="1"/>
</dbReference>
<dbReference type="NCBIfam" id="NF004745">
    <property type="entry name" value="PRK06076.1-6"/>
    <property type="match status" value="1"/>
</dbReference>
<dbReference type="PANTHER" id="PTHR11432">
    <property type="entry name" value="NADH DEHYDROGENASE SUBUNIT 1"/>
    <property type="match status" value="1"/>
</dbReference>
<dbReference type="PANTHER" id="PTHR11432:SF3">
    <property type="entry name" value="NADH-UBIQUINONE OXIDOREDUCTASE CHAIN 1"/>
    <property type="match status" value="1"/>
</dbReference>
<dbReference type="Pfam" id="PF00146">
    <property type="entry name" value="NADHdh"/>
    <property type="match status" value="1"/>
</dbReference>
<dbReference type="PROSITE" id="PS00668">
    <property type="entry name" value="COMPLEX1_ND1_2"/>
    <property type="match status" value="1"/>
</dbReference>
<feature type="chain" id="PRO_0000244947" description="NADH-quinone oxidoreductase subunit H 2">
    <location>
        <begin position="1"/>
        <end position="341"/>
    </location>
</feature>
<feature type="transmembrane region" description="Helical" evidence="1">
    <location>
        <begin position="13"/>
        <end position="33"/>
    </location>
</feature>
<feature type="transmembrane region" description="Helical" evidence="1">
    <location>
        <begin position="82"/>
        <end position="102"/>
    </location>
</feature>
<feature type="transmembrane region" description="Helical" evidence="1">
    <location>
        <begin position="115"/>
        <end position="135"/>
    </location>
</feature>
<feature type="transmembrane region" description="Helical" evidence="1">
    <location>
        <begin position="161"/>
        <end position="181"/>
    </location>
</feature>
<feature type="transmembrane region" description="Helical" evidence="1">
    <location>
        <begin position="190"/>
        <end position="210"/>
    </location>
</feature>
<feature type="transmembrane region" description="Helical" evidence="1">
    <location>
        <begin position="242"/>
        <end position="262"/>
    </location>
</feature>
<feature type="transmembrane region" description="Helical" evidence="1">
    <location>
        <begin position="277"/>
        <end position="297"/>
    </location>
</feature>
<feature type="transmembrane region" description="Helical" evidence="1">
    <location>
        <begin position="317"/>
        <end position="337"/>
    </location>
</feature>
<name>NUOH2_RHOP2</name>
<proteinExistence type="inferred from homology"/>
<evidence type="ECO:0000255" key="1">
    <source>
        <dbReference type="HAMAP-Rule" id="MF_01350"/>
    </source>
</evidence>
<accession>Q2IWX6</accession>
<organism>
    <name type="scientific">Rhodopseudomonas palustris (strain HaA2)</name>
    <dbReference type="NCBI Taxonomy" id="316058"/>
    <lineage>
        <taxon>Bacteria</taxon>
        <taxon>Pseudomonadati</taxon>
        <taxon>Pseudomonadota</taxon>
        <taxon>Alphaproteobacteria</taxon>
        <taxon>Hyphomicrobiales</taxon>
        <taxon>Nitrobacteraceae</taxon>
        <taxon>Rhodopseudomonas</taxon>
    </lineage>
</organism>
<gene>
    <name evidence="1" type="primary">nuoH2</name>
    <name type="ordered locus">RPB_2581</name>
</gene>
<protein>
    <recommendedName>
        <fullName evidence="1">NADH-quinone oxidoreductase subunit H 2</fullName>
        <ecNumber evidence="1">7.1.1.-</ecNumber>
    </recommendedName>
    <alternativeName>
        <fullName evidence="1">NADH dehydrogenase I subunit H 2</fullName>
    </alternativeName>
    <alternativeName>
        <fullName evidence="1">NDH-1 subunit H 2</fullName>
    </alternativeName>
</protein>
<reference key="1">
    <citation type="submission" date="2006-01" db="EMBL/GenBank/DDBJ databases">
        <title>Complete sequence of Rhodopseudomonas palustris HaA2.</title>
        <authorList>
            <consortium name="US DOE Joint Genome Institute"/>
            <person name="Copeland A."/>
            <person name="Lucas S."/>
            <person name="Lapidus A."/>
            <person name="Barry K."/>
            <person name="Detter J.C."/>
            <person name="Glavina T."/>
            <person name="Hammon N."/>
            <person name="Israni S."/>
            <person name="Pitluck S."/>
            <person name="Chain P."/>
            <person name="Malfatti S."/>
            <person name="Shin M."/>
            <person name="Vergez L."/>
            <person name="Schmutz J."/>
            <person name="Larimer F."/>
            <person name="Land M."/>
            <person name="Hauser L."/>
            <person name="Pelletier D.A."/>
            <person name="Kyrpides N."/>
            <person name="Anderson I."/>
            <person name="Oda Y."/>
            <person name="Harwood C.S."/>
            <person name="Richardson P."/>
        </authorList>
    </citation>
    <scope>NUCLEOTIDE SEQUENCE [LARGE SCALE GENOMIC DNA]</scope>
    <source>
        <strain>HaA2</strain>
    </source>
</reference>